<protein>
    <recommendedName>
        <fullName>Histone H4</fullName>
    </recommendedName>
</protein>
<accession>P62802</accession>
<accession>P02304</accession>
<accession>P02305</accession>
<name>H4_PIG</name>
<comment type="function">
    <text>Core component of nucleosome. Nucleosomes wrap and compact DNA into chromatin, limiting DNA accessibility to the cellular machineries which require DNA as a template. Histones thereby play a central role in transcription regulation, DNA repair, DNA replication and chromosomal stability. DNA accessibility is regulated via a complex set of post-translational modifications of histones, also called histone code, and nucleosome remodeling.</text>
</comment>
<comment type="subunit">
    <text evidence="2 3">The nucleosome is a histone octamer containing two molecules each of H2A, H2B, H3 and H4 assembled in one H3-H4 heterotetramer and two H2A-H2B heterodimers. The octamer wraps approximately 147 bp of DNA (By similarity). Found in a co-chaperone complex with DNJC9, MCM2 and histone H3.3-H4 dimers (By similarity). Within the complex, interacts with DNJC9 (via C-terminus); the interaction is direct (By similarity). Interacts with NASP; NASP is a histone chaperone that stabilizes and maintains a soluble pool of Histone H3-H4 dimers (By similarity).</text>
</comment>
<comment type="subcellular location">
    <subcellularLocation>
        <location evidence="3">Nucleus</location>
    </subcellularLocation>
    <subcellularLocation>
        <location evidence="1">Chromosome</location>
    </subcellularLocation>
    <text evidence="3">Localized to the nucleus when acetylated in step 11 spermatids.</text>
</comment>
<comment type="PTM">
    <text evidence="2 3">Acetylation at Lys-6 (H4K5ac), Lys-9 (H4K8ac), Lys-13 (H4K12ac) and Lys-17 (H4K16ac) occurs in coding regions of the genome but not in heterochromatin. Acetylated as part of spermatogenesis progression prior to histone-to-protamine exchange (By similarity).</text>
</comment>
<comment type="PTM">
    <text evidence="2">Citrullination at Arg-4 (H4R3ci) by PADI4 impairs methylation.</text>
</comment>
<comment type="PTM">
    <text evidence="2">Monomethylation and asymmetric dimethylation at Arg-4 (H4R3me1 and H4R3me2a, respectively) by PRMT1 favors acetylation at Lys-9 (H4K8ac) and Lys-13 (H4K12ac). Demethylation is performed by JMJD6. Symmetric dimethylation on Arg-4 (H4R3me2s) by the PRDM1/PRMT5 complex may play a crucial role in the germ-cell lineage (By similarity).</text>
</comment>
<comment type="PTM">
    <text evidence="2">Monomethylated, dimethylated or trimethylated at Lys-21 (H4K20me1, H4K20me2, H4K20me3). Monomethylation is performed by KMT5A/SET8. Trimethylation is performed by KMT5B and KMT5C and induces gene silencing. Monomethylated at Lys-13 (H4K12me1) by N6AMT1; H4K12me1 modification is present at the promoters of numerous genes encoding cell cycle regulators.</text>
</comment>
<comment type="PTM">
    <text evidence="2">Acetyl-methylated at Lys-6 and Lys-13 (H4K5acme and H4K12acme, respectively), acetyl-methylation is an epigenetic mark of active chromatin associated with increased transcriptional initiation. Acetyl-methylation is formed by acetylation by EP300/p300 of lysine residues that are already monomethylated on the same side chain. H4K5acme and H4K12acme marks specifically bind BRD2.</text>
</comment>
<comment type="PTM">
    <text evidence="2">Phosphorylated by PAK2 at Ser-48 (H4S47ph). This phosphorylation increases the association of H3.3-H4 with the histone chaperone HIRA, thus promoting nucleosome assembly of H3.3-H4 and inhibiting nucleosome assembly of H3.1-H4 (By similarity).</text>
</comment>
<comment type="PTM">
    <text evidence="2 3">Ubiquitinated by the CUL4-DDB-RBX1 complex in response to ultraviolet irradiation. This may weaken the interaction between histones and DNA and facilitate DNA accessibility to repair proteins. Monoubiquitinated at Lys-92 of histone H4 (H4K91ub1) in response to DNA damage. The exact role of H4K91ub1 in DNA damage response is still unclear but it may function as a licensing signal for additional histone H4 post-translational modifications such as H4 Lys-21 methylation (H4K20me) (By similarity). Ubiquitinated; by PHF7 (By similarity).</text>
</comment>
<comment type="PTM">
    <text evidence="2">Sumoylated, which is associated with transcriptional repression.</text>
</comment>
<comment type="PTM">
    <text evidence="2">Crotonylation (Kcr) is specifically present in male germ cells and marks testis-specific genes in post-meiotic cells, including X-linked genes that escape sex chromosome inactivation in haploid cells. Crotonylation marks active promoters and enhancers and confers resistance to transcriptional repressors. It is also associated with post-meiotically activated genes on autosomes (By similarity).</text>
</comment>
<comment type="PTM">
    <text evidence="3">Butyrylation of histones marks active promoters and competes with histone acetylation.</text>
</comment>
<comment type="PTM">
    <text evidence="2">Glutarylation at Lys-92 (H4K91glu) destabilizes nucleosomes by promoting dissociation of the H2A-H2B dimers from nucleosomes.</text>
</comment>
<comment type="PTM">
    <text evidence="2">Ufmylated; monofmylated by UFL1 at Lys-32 (H4K31Ufm1) in response to DNA damage.</text>
</comment>
<comment type="PTM">
    <text evidence="2">Lactylated in macrophages by EP300/P300 by using lactoyl-CoA directly derived from endogenous or exogenous lactate, leading to stimulates gene transcription. Delactylated by SIRT3 at Lys-17 (H4K16la).</text>
</comment>
<comment type="similarity">
    <text evidence="6">Belongs to the histone H4 family.</text>
</comment>
<proteinExistence type="evidence at protein level"/>
<dbReference type="PIR" id="A02638">
    <property type="entry name" value="HSPG4"/>
</dbReference>
<dbReference type="RefSeq" id="XP_001927985.1">
    <property type="nucleotide sequence ID" value="XM_001927950.5"/>
</dbReference>
<dbReference type="RefSeq" id="XP_005665718.1">
    <property type="nucleotide sequence ID" value="XM_005665661.2"/>
</dbReference>
<dbReference type="RefSeq" id="XP_013832960.1">
    <property type="nucleotide sequence ID" value="XM_013977506.1"/>
</dbReference>
<dbReference type="RefSeq" id="XP_013852652.1">
    <property type="nucleotide sequence ID" value="XM_013997198.1"/>
</dbReference>
<dbReference type="RefSeq" id="XP_020945589.1">
    <property type="nucleotide sequence ID" value="XM_021089930.1"/>
</dbReference>
<dbReference type="RefSeq" id="XP_020954087.1">
    <property type="nucleotide sequence ID" value="XM_021098428.1"/>
</dbReference>
<dbReference type="RefSeq" id="XP_020954094.1">
    <property type="nucleotide sequence ID" value="XM_021098435.1"/>
</dbReference>
<dbReference type="RefSeq" id="XP_020955506.1">
    <property type="nucleotide sequence ID" value="XM_021099847.1"/>
</dbReference>
<dbReference type="RefSeq" id="XP_020955508.1">
    <property type="nucleotide sequence ID" value="XM_021099849.1"/>
</dbReference>
<dbReference type="RefSeq" id="XP_020955509.1">
    <property type="nucleotide sequence ID" value="XM_021099850.1"/>
</dbReference>
<dbReference type="SMR" id="P62802"/>
<dbReference type="FunCoup" id="P62802">
    <property type="interactions" value="1341"/>
</dbReference>
<dbReference type="STRING" id="9823.ENSSSCP00000027849"/>
<dbReference type="iPTMnet" id="P62802"/>
<dbReference type="PaxDb" id="9823-ENSSSCP00000001246"/>
<dbReference type="PeptideAtlas" id="P62802"/>
<dbReference type="Ensembl" id="ENSSSCT00000091902.1">
    <property type="protein sequence ID" value="ENSSSCP00000080596.1"/>
    <property type="gene ID" value="ENSSSCG00000056247.1"/>
</dbReference>
<dbReference type="Ensembl" id="ENSSSCT00000092670.1">
    <property type="protein sequence ID" value="ENSSSCP00000078974.1"/>
    <property type="gene ID" value="ENSSSCG00000059426.1"/>
</dbReference>
<dbReference type="Ensembl" id="ENSSSCT00000093782.1">
    <property type="protein sequence ID" value="ENSSSCP00000077698.1"/>
    <property type="gene ID" value="ENSSSCG00000059526.1"/>
</dbReference>
<dbReference type="Ensembl" id="ENSSSCT00000095112.1">
    <property type="protein sequence ID" value="ENSSSCP00000074998.1"/>
    <property type="gene ID" value="ENSSSCG00000053691.1"/>
</dbReference>
<dbReference type="Ensembl" id="ENSSSCT00000095385.1">
    <property type="protein sequence ID" value="ENSSSCP00000079276.1"/>
    <property type="gene ID" value="ENSSSCG00000059703.1"/>
</dbReference>
<dbReference type="Ensembl" id="ENSSSCT00000096937.1">
    <property type="protein sequence ID" value="ENSSSCP00000078489.1"/>
    <property type="gene ID" value="ENSSSCG00000054633.1"/>
</dbReference>
<dbReference type="Ensembl" id="ENSSSCT00000099197.1">
    <property type="protein sequence ID" value="ENSSSCP00000079046.1"/>
    <property type="gene ID" value="ENSSSCG00000060975.1"/>
</dbReference>
<dbReference type="Ensembl" id="ENSSSCT00000099931.1">
    <property type="protein sequence ID" value="ENSSSCP00000081269.1"/>
    <property type="gene ID" value="ENSSSCG00000059243.1"/>
</dbReference>
<dbReference type="Ensembl" id="ENSSSCT00000101330.1">
    <property type="protein sequence ID" value="ENSSSCP00000080566.1"/>
    <property type="gene ID" value="ENSSSCG00000056814.1"/>
</dbReference>
<dbReference type="Ensembl" id="ENSSSCT00000104200.1">
    <property type="protein sequence ID" value="ENSSSCP00000080530.1"/>
    <property type="gene ID" value="ENSSSCG00000059574.1"/>
</dbReference>
<dbReference type="Ensembl" id="ENSSSCT00000105679.1">
    <property type="protein sequence ID" value="ENSSSCP00000075939.1"/>
    <property type="gene ID" value="ENSSSCG00000057661.1"/>
</dbReference>
<dbReference type="Ensembl" id="ENSSSCT00015005372.1">
    <property type="protein sequence ID" value="ENSSSCP00015002118.1"/>
    <property type="gene ID" value="ENSSSCG00015004059.1"/>
</dbReference>
<dbReference type="Ensembl" id="ENSSSCT00015005393.1">
    <property type="protein sequence ID" value="ENSSSCP00015002135.1"/>
    <property type="gene ID" value="ENSSSCG00015004070.1"/>
</dbReference>
<dbReference type="Ensembl" id="ENSSSCT00015073208.1">
    <property type="protein sequence ID" value="ENSSSCP00015029394.1"/>
    <property type="gene ID" value="ENSSSCG00015054968.1"/>
</dbReference>
<dbReference type="Ensembl" id="ENSSSCT00015073325.1">
    <property type="protein sequence ID" value="ENSSSCP00015029445.1"/>
    <property type="gene ID" value="ENSSSCG00015055045.1"/>
</dbReference>
<dbReference type="Ensembl" id="ENSSSCT00015074143.1">
    <property type="protein sequence ID" value="ENSSSCP00015029768.1"/>
    <property type="gene ID" value="ENSSSCG00015055628.1"/>
</dbReference>
<dbReference type="Ensembl" id="ENSSSCT00015078328.1">
    <property type="protein sequence ID" value="ENSSSCP00015031589.1"/>
    <property type="gene ID" value="ENSSSCG00015058697.1"/>
</dbReference>
<dbReference type="Ensembl" id="ENSSSCT00025026893.1">
    <property type="protein sequence ID" value="ENSSSCP00025011384.1"/>
    <property type="gene ID" value="ENSSSCG00025019832.1"/>
</dbReference>
<dbReference type="Ensembl" id="ENSSSCT00025027527.1">
    <property type="protein sequence ID" value="ENSSSCP00025011653.1"/>
    <property type="gene ID" value="ENSSSCG00025020277.1"/>
</dbReference>
<dbReference type="Ensembl" id="ENSSSCT00025027920.1">
    <property type="protein sequence ID" value="ENSSSCP00025011822.1"/>
    <property type="gene ID" value="ENSSSCG00025020563.1"/>
</dbReference>
<dbReference type="Ensembl" id="ENSSSCT00025028141.1">
    <property type="protein sequence ID" value="ENSSSCP00025011904.1"/>
    <property type="gene ID" value="ENSSSCG00025020737.1"/>
</dbReference>
<dbReference type="Ensembl" id="ENSSSCT00025052882.1">
    <property type="protein sequence ID" value="ENSSSCP00025022538.1"/>
    <property type="gene ID" value="ENSSSCG00025038935.1"/>
</dbReference>
<dbReference type="Ensembl" id="ENSSSCT00025092327.1">
    <property type="protein sequence ID" value="ENSSSCP00025040514.1"/>
    <property type="gene ID" value="ENSSSCG00025067228.1"/>
</dbReference>
<dbReference type="Ensembl" id="ENSSSCT00030041938.1">
    <property type="protein sequence ID" value="ENSSSCP00030019077.1"/>
    <property type="gene ID" value="ENSSSCG00030030194.1"/>
</dbReference>
<dbReference type="Ensembl" id="ENSSSCT00030066167.1">
    <property type="protein sequence ID" value="ENSSSCP00030030298.1"/>
    <property type="gene ID" value="ENSSSCG00030047398.1"/>
</dbReference>
<dbReference type="Ensembl" id="ENSSSCT00030067063.1">
    <property type="protein sequence ID" value="ENSSSCP00030030714.1"/>
    <property type="gene ID" value="ENSSSCG00030048045.1"/>
</dbReference>
<dbReference type="Ensembl" id="ENSSSCT00030067819.1">
    <property type="protein sequence ID" value="ENSSSCP00030031051.1"/>
    <property type="gene ID" value="ENSSSCG00030048583.1"/>
</dbReference>
<dbReference type="Ensembl" id="ENSSSCT00030095232.1">
    <property type="protein sequence ID" value="ENSSSCP00030043885.1"/>
    <property type="gene ID" value="ENSSSCG00030068104.1"/>
</dbReference>
<dbReference type="Ensembl" id="ENSSSCT00035048392.1">
    <property type="protein sequence ID" value="ENSSSCP00035019354.1"/>
    <property type="gene ID" value="ENSSSCG00035036508.1"/>
</dbReference>
<dbReference type="Ensembl" id="ENSSSCT00035082311.1">
    <property type="protein sequence ID" value="ENSSSCP00035034131.1"/>
    <property type="gene ID" value="ENSSSCG00035061278.1"/>
</dbReference>
<dbReference type="Ensembl" id="ENSSSCT00035086902.1">
    <property type="protein sequence ID" value="ENSSSCP00035036232.1"/>
    <property type="gene ID" value="ENSSSCG00035064570.1"/>
</dbReference>
<dbReference type="Ensembl" id="ENSSSCT00035103342.1">
    <property type="protein sequence ID" value="ENSSSCP00035044200.1"/>
    <property type="gene ID" value="ENSSSCG00035075991.1"/>
</dbReference>
<dbReference type="Ensembl" id="ENSSSCT00035104536.1">
    <property type="protein sequence ID" value="ENSSSCP00035044812.1"/>
    <property type="gene ID" value="ENSSSCG00035076807.1"/>
</dbReference>
<dbReference type="Ensembl" id="ENSSSCT00035105106.1">
    <property type="protein sequence ID" value="ENSSSCP00035045092.1"/>
    <property type="gene ID" value="ENSSSCG00035077191.1"/>
</dbReference>
<dbReference type="Ensembl" id="ENSSSCT00040064599.1">
    <property type="protein sequence ID" value="ENSSSCP00040027265.1"/>
    <property type="gene ID" value="ENSSSCG00040047990.1"/>
</dbReference>
<dbReference type="Ensembl" id="ENSSSCT00040065788.1">
    <property type="protein sequence ID" value="ENSSSCP00040027879.1"/>
    <property type="gene ID" value="ENSSSCG00040048823.1"/>
</dbReference>
<dbReference type="Ensembl" id="ENSSSCT00040066058.1">
    <property type="protein sequence ID" value="ENSSSCP00040028010.1"/>
    <property type="gene ID" value="ENSSSCG00040049005.1"/>
</dbReference>
<dbReference type="Ensembl" id="ENSSSCT00040082379.1">
    <property type="protein sequence ID" value="ENSSSCP00040035867.1"/>
    <property type="gene ID" value="ENSSSCG00040060565.1"/>
</dbReference>
<dbReference type="Ensembl" id="ENSSSCT00045003000.1">
    <property type="protein sequence ID" value="ENSSSCP00045001891.1"/>
    <property type="gene ID" value="ENSSSCG00045001926.1"/>
</dbReference>
<dbReference type="Ensembl" id="ENSSSCT00045003265.1">
    <property type="protein sequence ID" value="ENSSSCP00045002046.1"/>
    <property type="gene ID" value="ENSSSCG00045002102.1"/>
</dbReference>
<dbReference type="Ensembl" id="ENSSSCT00045003503.1">
    <property type="protein sequence ID" value="ENSSSCP00045002206.1"/>
    <property type="gene ID" value="ENSSSCG00045002250.1"/>
</dbReference>
<dbReference type="Ensembl" id="ENSSSCT00045003704.1">
    <property type="protein sequence ID" value="ENSSSCP00045002346.1"/>
    <property type="gene ID" value="ENSSSCG00045002375.1"/>
</dbReference>
<dbReference type="Ensembl" id="ENSSSCT00045004194.1">
    <property type="protein sequence ID" value="ENSSSCP00045002661.1"/>
    <property type="gene ID" value="ENSSSCG00045002687.1"/>
</dbReference>
<dbReference type="Ensembl" id="ENSSSCT00045025214.1">
    <property type="protein sequence ID" value="ENSSSCP00045017404.1"/>
    <property type="gene ID" value="ENSSSCG00045014850.1"/>
</dbReference>
<dbReference type="Ensembl" id="ENSSSCT00045049079.1">
    <property type="protein sequence ID" value="ENSSSCP00045034145.1"/>
    <property type="gene ID" value="ENSSSCG00045028790.1"/>
</dbReference>
<dbReference type="Ensembl" id="ENSSSCT00050063643.1">
    <property type="protein sequence ID" value="ENSSSCP00050027349.1"/>
    <property type="gene ID" value="ENSSSCG00050046757.1"/>
</dbReference>
<dbReference type="Ensembl" id="ENSSSCT00050065388.1">
    <property type="protein sequence ID" value="ENSSSCP00050028168.1"/>
    <property type="gene ID" value="ENSSSCG00050047997.1"/>
</dbReference>
<dbReference type="Ensembl" id="ENSSSCT00050083513.1">
    <property type="protein sequence ID" value="ENSSSCP00050035852.1"/>
    <property type="gene ID" value="ENSSSCG00050061289.1"/>
</dbReference>
<dbReference type="Ensembl" id="ENSSSCT00055021432.1">
    <property type="protein sequence ID" value="ENSSSCP00055016980.1"/>
    <property type="gene ID" value="ENSSSCG00055010917.1"/>
</dbReference>
<dbReference type="Ensembl" id="ENSSSCT00055036826.1">
    <property type="protein sequence ID" value="ENSSSCP00055029272.1"/>
    <property type="gene ID" value="ENSSSCG00055018818.1"/>
</dbReference>
<dbReference type="Ensembl" id="ENSSSCT00055041315.1">
    <property type="protein sequence ID" value="ENSSSCP00055032883.1"/>
    <property type="gene ID" value="ENSSSCG00055021056.1"/>
</dbReference>
<dbReference type="Ensembl" id="ENSSSCT00055051417.1">
    <property type="protein sequence ID" value="ENSSSCP00055041098.1"/>
    <property type="gene ID" value="ENSSSCG00055026044.1"/>
</dbReference>
<dbReference type="Ensembl" id="ENSSSCT00055051744.1">
    <property type="protein sequence ID" value="ENSSSCP00055041347.1"/>
    <property type="gene ID" value="ENSSSCG00055026200.1"/>
</dbReference>
<dbReference type="Ensembl" id="ENSSSCT00055052685.1">
    <property type="protein sequence ID" value="ENSSSCP00055042063.1"/>
    <property type="gene ID" value="ENSSSCG00055026656.1"/>
</dbReference>
<dbReference type="Ensembl" id="ENSSSCT00055052759.1">
    <property type="protein sequence ID" value="ENSSSCP00055042119.1"/>
    <property type="gene ID" value="ENSSSCG00055026694.1"/>
</dbReference>
<dbReference type="Ensembl" id="ENSSSCT00060014532.1">
    <property type="protein sequence ID" value="ENSSSCP00060005641.1"/>
    <property type="gene ID" value="ENSSSCG00060011136.1"/>
</dbReference>
<dbReference type="Ensembl" id="ENSSSCT00060018219.1">
    <property type="protein sequence ID" value="ENSSSCP00060007289.1"/>
    <property type="gene ID" value="ENSSSCG00060013823.1"/>
</dbReference>
<dbReference type="Ensembl" id="ENSSSCT00060020983.1">
    <property type="protein sequence ID" value="ENSSSCP00060008615.1"/>
    <property type="gene ID" value="ENSSSCG00060015773.1"/>
</dbReference>
<dbReference type="Ensembl" id="ENSSSCT00060061151.1">
    <property type="protein sequence ID" value="ENSSSCP00060026192.1"/>
    <property type="gene ID" value="ENSSSCG00060045080.1"/>
</dbReference>
<dbReference type="Ensembl" id="ENSSSCT00065017890.1">
    <property type="protein sequence ID" value="ENSSSCP00065007286.1"/>
    <property type="gene ID" value="ENSSSCG00065013473.1"/>
</dbReference>
<dbReference type="Ensembl" id="ENSSSCT00065017898.1">
    <property type="protein sequence ID" value="ENSSSCP00065007290.1"/>
    <property type="gene ID" value="ENSSSCG00065013473.1"/>
</dbReference>
<dbReference type="Ensembl" id="ENSSSCT00065059818.1">
    <property type="protein sequence ID" value="ENSSSCP00065025951.1"/>
    <property type="gene ID" value="ENSSSCG00065043729.1"/>
</dbReference>
<dbReference type="Ensembl" id="ENSSSCT00065089951.1">
    <property type="protein sequence ID" value="ENSSSCP00065039339.1"/>
    <property type="gene ID" value="ENSSSCG00065065546.1"/>
</dbReference>
<dbReference type="Ensembl" id="ENSSSCT00065092386.1">
    <property type="protein sequence ID" value="ENSSSCP00065040428.1"/>
    <property type="gene ID" value="ENSSSCG00065067312.1"/>
</dbReference>
<dbReference type="Ensembl" id="ENSSSCT00065094262.1">
    <property type="protein sequence ID" value="ENSSSCP00065041231.1"/>
    <property type="gene ID" value="ENSSSCG00065068670.1"/>
</dbReference>
<dbReference type="Ensembl" id="ENSSSCT00070049005.1">
    <property type="protein sequence ID" value="ENSSSCP00070041383.1"/>
    <property type="gene ID" value="ENSSSCG00070024561.1"/>
</dbReference>
<dbReference type="Ensembl" id="ENSSSCT00070049830.1">
    <property type="protein sequence ID" value="ENSSSCP00070042081.1"/>
    <property type="gene ID" value="ENSSSCG00070024946.1"/>
</dbReference>
<dbReference type="Ensembl" id="ENSSSCT00070049869.1">
    <property type="protein sequence ID" value="ENSSSCP00070042117.1"/>
    <property type="gene ID" value="ENSSSCG00070024963.1"/>
</dbReference>
<dbReference type="Ensembl" id="ENSSSCT00085000534">
    <property type="protein sequence ID" value="ENSSSCP00085000408"/>
    <property type="gene ID" value="ENSSSCG00085000408"/>
</dbReference>
<dbReference type="Ensembl" id="ENSSSCT00085051370">
    <property type="protein sequence ID" value="ENSSSCP00085036006"/>
    <property type="gene ID" value="ENSSSCG00085026789"/>
</dbReference>
<dbReference type="Ensembl" id="ENSSSCT00090030990">
    <property type="protein sequence ID" value="ENSSSCP00090019226"/>
    <property type="gene ID" value="ENSSSCG00090017569"/>
</dbReference>
<dbReference type="Ensembl" id="ENSSSCT00090030992">
    <property type="protein sequence ID" value="ENSSSCP00090019228"/>
    <property type="gene ID" value="ENSSSCG00090017572"/>
</dbReference>
<dbReference type="Ensembl" id="ENSSSCT00105013323">
    <property type="protein sequence ID" value="ENSSSCP00105009764"/>
    <property type="gene ID" value="ENSSSCG00105006604"/>
</dbReference>
<dbReference type="Ensembl" id="ENSSSCT00105047344">
    <property type="protein sequence ID" value="ENSSSCP00105033069"/>
    <property type="gene ID" value="ENSSSCG00105025009"/>
</dbReference>
<dbReference type="Ensembl" id="ENSSSCT00105047357">
    <property type="protein sequence ID" value="ENSSSCP00105033082"/>
    <property type="gene ID" value="ENSSSCG00105025012"/>
</dbReference>
<dbReference type="Ensembl" id="ENSSSCT00105047387">
    <property type="protein sequence ID" value="ENSSSCP00105033107"/>
    <property type="gene ID" value="ENSSSCG00105025026"/>
</dbReference>
<dbReference type="Ensembl" id="ENSSSCT00105047410">
    <property type="protein sequence ID" value="ENSSSCP00105033129"/>
    <property type="gene ID" value="ENSSSCG00105025040"/>
</dbReference>
<dbReference type="Ensembl" id="ENSSSCT00105057539">
    <property type="protein sequence ID" value="ENSSSCP00105040601"/>
    <property type="gene ID" value="ENSSSCG00105030291"/>
</dbReference>
<dbReference type="Ensembl" id="ENSSSCT00105057647">
    <property type="protein sequence ID" value="ENSSSCP00105040691"/>
    <property type="gene ID" value="ENSSSCG00105030342"/>
</dbReference>
<dbReference type="Ensembl" id="ENSSSCT00105057666">
    <property type="protein sequence ID" value="ENSSSCP00105040708"/>
    <property type="gene ID" value="ENSSSCG00105030348"/>
</dbReference>
<dbReference type="Ensembl" id="ENSSSCT00110053348">
    <property type="protein sequence ID" value="ENSSSCP00110037200"/>
    <property type="gene ID" value="ENSSSCG00110027849"/>
</dbReference>
<dbReference type="Ensembl" id="ENSSSCT00110053420">
    <property type="protein sequence ID" value="ENSSSCP00110037244"/>
    <property type="gene ID" value="ENSSSCG00110027869"/>
</dbReference>
<dbReference type="Ensembl" id="ENSSSCT00110053451">
    <property type="protein sequence ID" value="ENSSSCP00110037264"/>
    <property type="gene ID" value="ENSSSCG00110027890"/>
</dbReference>
<dbReference type="Ensembl" id="ENSSSCT00110053490">
    <property type="protein sequence ID" value="ENSSSCP00110037292"/>
    <property type="gene ID" value="ENSSSCG00110027910"/>
</dbReference>
<dbReference type="Ensembl" id="ENSSSCT00110054999">
    <property type="protein sequence ID" value="ENSSSCP00110038198"/>
    <property type="gene ID" value="ENSSSCG00110028721"/>
</dbReference>
<dbReference type="Ensembl" id="ENSSSCT00110066788">
    <property type="protein sequence ID" value="ENSSSCP00110047046"/>
    <property type="gene ID" value="ENSSSCG00110035121"/>
</dbReference>
<dbReference type="Ensembl" id="ENSSSCT00115005897">
    <property type="protein sequence ID" value="ENSSSCP00115005491"/>
    <property type="gene ID" value="ENSSSCG00115003494"/>
</dbReference>
<dbReference type="Ensembl" id="ENSSSCT00115007029">
    <property type="protein sequence ID" value="ENSSSCP00115006590"/>
    <property type="gene ID" value="ENSSSCG00115004088"/>
</dbReference>
<dbReference type="Ensembl" id="ENSSSCT00115009690">
    <property type="protein sequence ID" value="ENSSSCP00115009108"/>
    <property type="gene ID" value="ENSSSCG00115005612"/>
</dbReference>
<dbReference type="Ensembl" id="ENSSSCT00115013021">
    <property type="protein sequence ID" value="ENSSSCP00115012297"/>
    <property type="gene ID" value="ENSSSCG00115007472"/>
</dbReference>
<dbReference type="Ensembl" id="ENSSSCT00115015428">
    <property type="protein sequence ID" value="ENSSSCP00115014565"/>
    <property type="gene ID" value="ENSSSCG00115008848"/>
</dbReference>
<dbReference type="Ensembl" id="ENSSSCT00115015456">
    <property type="protein sequence ID" value="ENSSSCP00115014593"/>
    <property type="gene ID" value="ENSSSCG00115008867"/>
</dbReference>
<dbReference type="Ensembl" id="ENSSSCT00115015471">
    <property type="protein sequence ID" value="ENSSSCP00115014609"/>
    <property type="gene ID" value="ENSSSCG00115008874"/>
</dbReference>
<dbReference type="Ensembl" id="ENSSSCT00115015494">
    <property type="protein sequence ID" value="ENSSSCP00115014631"/>
    <property type="gene ID" value="ENSSSCG00115008897"/>
</dbReference>
<dbReference type="Ensembl" id="ENSSSCT00115015521">
    <property type="protein sequence ID" value="ENSSSCP00115014658"/>
    <property type="gene ID" value="ENSSSCG00115008913"/>
</dbReference>
<dbReference type="Ensembl" id="ENSSSCT00115015547">
    <property type="protein sequence ID" value="ENSSSCP00115014675"/>
    <property type="gene ID" value="ENSSSCG00115008938"/>
</dbReference>
<dbReference type="Ensembl" id="ENSSSCT00115015563">
    <property type="protein sequence ID" value="ENSSSCP00115014687"/>
    <property type="gene ID" value="ENSSSCG00115008951"/>
</dbReference>
<dbReference type="Ensembl" id="ENSSSCT00115028674">
    <property type="protein sequence ID" value="ENSSSCP00115027202"/>
    <property type="gene ID" value="ENSSSCG00115016375"/>
</dbReference>
<dbReference type="Ensembl" id="ENSSSCT00130047723">
    <property type="protein sequence ID" value="ENSSSCP00130033545"/>
    <property type="gene ID" value="ENSSSCG00130024695"/>
</dbReference>
<dbReference type="Ensembl" id="ENSSSCT00130075420">
    <property type="protein sequence ID" value="ENSSSCP00130054267"/>
    <property type="gene ID" value="ENSSSCG00130038692"/>
</dbReference>
<dbReference type="GeneID" id="100158117"/>
<dbReference type="GeneID" id="100621389"/>
<dbReference type="GeneID" id="110261477"/>
<dbReference type="GeneID" id="110261487"/>
<dbReference type="GeneID" id="110261673"/>
<dbReference type="GeneID" id="110261674"/>
<dbReference type="GeneID" id="110261675"/>
<dbReference type="KEGG" id="ssc:100158117"/>
<dbReference type="CTD" id="8363"/>
<dbReference type="eggNOG" id="KOG3467">
    <property type="taxonomic scope" value="Eukaryota"/>
</dbReference>
<dbReference type="GeneTree" id="ENSGT01060000248528"/>
<dbReference type="HOGENOM" id="CLU_109117_2_3_1"/>
<dbReference type="InParanoid" id="P62802"/>
<dbReference type="OrthoDB" id="9831410at2759"/>
<dbReference type="Reactome" id="R-SSC-110330">
    <property type="pathway name" value="Recognition and association of DNA glycosylase with site containing an affected purine"/>
</dbReference>
<dbReference type="Reactome" id="R-SSC-110331">
    <property type="pathway name" value="Cleavage of the damaged purine"/>
</dbReference>
<dbReference type="Reactome" id="R-SSC-212300">
    <property type="pathway name" value="PRC2 methylates histones and DNA"/>
</dbReference>
<dbReference type="Reactome" id="R-SSC-2299718">
    <property type="pathway name" value="Condensation of Prophase Chromosomes"/>
</dbReference>
<dbReference type="Reactome" id="R-SSC-2559580">
    <property type="pathway name" value="Oxidative Stress Induced Senescence"/>
</dbReference>
<dbReference type="Reactome" id="R-SSC-2559582">
    <property type="pathway name" value="Senescence-Associated Secretory Phenotype (SASP)"/>
</dbReference>
<dbReference type="Reactome" id="R-SSC-2559586">
    <property type="pathway name" value="DNA Damage/Telomere Stress Induced Senescence"/>
</dbReference>
<dbReference type="Reactome" id="R-SSC-3214815">
    <property type="pathway name" value="HDACs deacetylate histones"/>
</dbReference>
<dbReference type="Reactome" id="R-SSC-3214841">
    <property type="pathway name" value="PKMTs methylate histone lysines"/>
</dbReference>
<dbReference type="Reactome" id="R-SSC-3214842">
    <property type="pathway name" value="HDMs demethylate histones"/>
</dbReference>
<dbReference type="Reactome" id="R-SSC-3214847">
    <property type="pathway name" value="HATs acetylate histones"/>
</dbReference>
<dbReference type="Reactome" id="R-SSC-3214858">
    <property type="pathway name" value="RMTs methylate histone arginines"/>
</dbReference>
<dbReference type="Reactome" id="R-SSC-427359">
    <property type="pathway name" value="SIRT1 negatively regulates rRNA expression"/>
</dbReference>
<dbReference type="Reactome" id="R-SSC-427413">
    <property type="pathway name" value="NoRC negatively regulates rRNA expression"/>
</dbReference>
<dbReference type="Reactome" id="R-SSC-4551638">
    <property type="pathway name" value="SUMOylation of chromatin organization proteins"/>
</dbReference>
<dbReference type="Reactome" id="R-SSC-5250924">
    <property type="pathway name" value="B-WICH complex positively regulates rRNA expression"/>
</dbReference>
<dbReference type="Reactome" id="R-SSC-5578749">
    <property type="pathway name" value="Transcriptional regulation by small RNAs"/>
</dbReference>
<dbReference type="Reactome" id="R-SSC-5625886">
    <property type="pathway name" value="Activated PKN1 stimulates transcription of AR (androgen receptor) regulated genes KLK2 and KLK3"/>
</dbReference>
<dbReference type="Reactome" id="R-SSC-5693565">
    <property type="pathway name" value="Recruitment and ATM-mediated phosphorylation of repair and signaling proteins at DNA double strand breaks"/>
</dbReference>
<dbReference type="Reactome" id="R-SSC-5693571">
    <property type="pathway name" value="Nonhomologous End-Joining (NHEJ)"/>
</dbReference>
<dbReference type="Reactome" id="R-SSC-5693607">
    <property type="pathway name" value="Processing of DNA double-strand break ends"/>
</dbReference>
<dbReference type="Reactome" id="R-SSC-606279">
    <property type="pathway name" value="Deposition of new CENPA-containing nucleosomes at the centromere"/>
</dbReference>
<dbReference type="Reactome" id="R-SSC-68616">
    <property type="pathway name" value="Assembly of the ORC complex at the origin of replication"/>
</dbReference>
<dbReference type="Reactome" id="R-SSC-69473">
    <property type="pathway name" value="G2/M DNA damage checkpoint"/>
</dbReference>
<dbReference type="Reactome" id="R-SSC-73728">
    <property type="pathway name" value="RNA Polymerase I Promoter Opening"/>
</dbReference>
<dbReference type="Reactome" id="R-SSC-73772">
    <property type="pathway name" value="RNA Polymerase I Promoter Escape"/>
</dbReference>
<dbReference type="Reactome" id="R-SSC-8936459">
    <property type="pathway name" value="RUNX1 regulates genes involved in megakaryocyte differentiation and platelet function"/>
</dbReference>
<dbReference type="Reactome" id="R-SSC-9018519">
    <property type="pathway name" value="Estrogen-dependent gene expression"/>
</dbReference>
<dbReference type="Reactome" id="R-SSC-9670095">
    <property type="pathway name" value="Inhibition of DNA recombination at telomere"/>
</dbReference>
<dbReference type="Reactome" id="R-SSC-9841922">
    <property type="pathway name" value="MLL4 and MLL3 complexes regulate expression of PPARG target genes in adipogenesis and hepatic steatosis"/>
</dbReference>
<dbReference type="Reactome" id="R-SSC-9843940">
    <property type="pathway name" value="Regulation of endogenous retroelements by KRAB-ZFP proteins"/>
</dbReference>
<dbReference type="Reactome" id="R-SSC-9843970">
    <property type="pathway name" value="Regulation of endogenous retroelements by the Human Silencing Hub (HUSH) complex"/>
</dbReference>
<dbReference type="Proteomes" id="UP000008227">
    <property type="component" value="Chromosome 4"/>
</dbReference>
<dbReference type="Proteomes" id="UP000008227">
    <property type="component" value="Chromosome 7"/>
</dbReference>
<dbReference type="Proteomes" id="UP000314985">
    <property type="component" value="Chromosome 7"/>
</dbReference>
<dbReference type="Proteomes" id="UP000314985">
    <property type="component" value="Unassembled WGS sequence"/>
</dbReference>
<dbReference type="Proteomes" id="UP000694570">
    <property type="component" value="Unplaced"/>
</dbReference>
<dbReference type="Proteomes" id="UP000694571">
    <property type="component" value="Unplaced"/>
</dbReference>
<dbReference type="Proteomes" id="UP000694720">
    <property type="component" value="Unplaced"/>
</dbReference>
<dbReference type="Proteomes" id="UP000694722">
    <property type="component" value="Unplaced"/>
</dbReference>
<dbReference type="Proteomes" id="UP000694723">
    <property type="component" value="Unplaced"/>
</dbReference>
<dbReference type="Proteomes" id="UP000694724">
    <property type="component" value="Unplaced"/>
</dbReference>
<dbReference type="Proteomes" id="UP000694725">
    <property type="component" value="Unplaced"/>
</dbReference>
<dbReference type="Proteomes" id="UP000694726">
    <property type="component" value="Unplaced"/>
</dbReference>
<dbReference type="Proteomes" id="UP000694727">
    <property type="component" value="Unplaced"/>
</dbReference>
<dbReference type="Proteomes" id="UP000694728">
    <property type="component" value="Unplaced"/>
</dbReference>
<dbReference type="Bgee" id="ENSSSCG00000031751">
    <property type="expression patterns" value="Expressed in ileum and 43 other cell types or tissues"/>
</dbReference>
<dbReference type="ExpressionAtlas" id="P62802">
    <property type="expression patterns" value="baseline and differential"/>
</dbReference>
<dbReference type="GO" id="GO:0000786">
    <property type="term" value="C:nucleosome"/>
    <property type="evidence" value="ECO:0007669"/>
    <property type="project" value="UniProtKB-KW"/>
</dbReference>
<dbReference type="GO" id="GO:0005634">
    <property type="term" value="C:nucleus"/>
    <property type="evidence" value="ECO:0007669"/>
    <property type="project" value="UniProtKB-SubCell"/>
</dbReference>
<dbReference type="GO" id="GO:0003677">
    <property type="term" value="F:DNA binding"/>
    <property type="evidence" value="ECO:0000318"/>
    <property type="project" value="GO_Central"/>
</dbReference>
<dbReference type="GO" id="GO:0046982">
    <property type="term" value="F:protein heterodimerization activity"/>
    <property type="evidence" value="ECO:0007669"/>
    <property type="project" value="InterPro"/>
</dbReference>
<dbReference type="GO" id="GO:0030527">
    <property type="term" value="F:structural constituent of chromatin"/>
    <property type="evidence" value="ECO:0007669"/>
    <property type="project" value="InterPro"/>
</dbReference>
<dbReference type="GO" id="GO:0006334">
    <property type="term" value="P:nucleosome assembly"/>
    <property type="evidence" value="ECO:0000318"/>
    <property type="project" value="GO_Central"/>
</dbReference>
<dbReference type="CDD" id="cd22912">
    <property type="entry name" value="HFD_H4"/>
    <property type="match status" value="1"/>
</dbReference>
<dbReference type="FunFam" id="1.10.20.10:FF:000002">
    <property type="entry name" value="Histone H4"/>
    <property type="match status" value="1"/>
</dbReference>
<dbReference type="Gene3D" id="1.10.20.10">
    <property type="entry name" value="Histone, subunit A"/>
    <property type="match status" value="1"/>
</dbReference>
<dbReference type="InterPro" id="IPR035425">
    <property type="entry name" value="CENP-T/H4_C"/>
</dbReference>
<dbReference type="InterPro" id="IPR009072">
    <property type="entry name" value="Histone-fold"/>
</dbReference>
<dbReference type="InterPro" id="IPR001951">
    <property type="entry name" value="Histone_H4"/>
</dbReference>
<dbReference type="InterPro" id="IPR019809">
    <property type="entry name" value="Histone_H4_CS"/>
</dbReference>
<dbReference type="InterPro" id="IPR004823">
    <property type="entry name" value="TAF_TATA-bd_Histone-like_dom"/>
</dbReference>
<dbReference type="PANTHER" id="PTHR10484">
    <property type="entry name" value="HISTONE H4"/>
    <property type="match status" value="1"/>
</dbReference>
<dbReference type="Pfam" id="PF15511">
    <property type="entry name" value="CENP-T_C"/>
    <property type="match status" value="1"/>
</dbReference>
<dbReference type="PRINTS" id="PR00623">
    <property type="entry name" value="HISTONEH4"/>
</dbReference>
<dbReference type="SMART" id="SM00417">
    <property type="entry name" value="H4"/>
    <property type="match status" value="1"/>
</dbReference>
<dbReference type="SMART" id="SM00803">
    <property type="entry name" value="TAF"/>
    <property type="match status" value="1"/>
</dbReference>
<dbReference type="SUPFAM" id="SSF47113">
    <property type="entry name" value="Histone-fold"/>
    <property type="match status" value="1"/>
</dbReference>
<dbReference type="PROSITE" id="PS00047">
    <property type="entry name" value="HISTONE_H4"/>
    <property type="match status" value="1"/>
</dbReference>
<feature type="initiator methionine" description="Removed" evidence="5">
    <location>
        <position position="1"/>
    </location>
</feature>
<feature type="chain" id="PRO_0000158348" description="Histone H4">
    <location>
        <begin position="2"/>
        <end position="103"/>
    </location>
</feature>
<feature type="DNA-binding region">
    <location>
        <begin position="17"/>
        <end position="21"/>
    </location>
</feature>
<feature type="region of interest" description="Disordered" evidence="4">
    <location>
        <begin position="1"/>
        <end position="20"/>
    </location>
</feature>
<feature type="compositionally biased region" description="Gly residues" evidence="4">
    <location>
        <begin position="1"/>
        <end position="14"/>
    </location>
</feature>
<feature type="modified residue" description="N-acetylserine" evidence="5">
    <location>
        <position position="2"/>
    </location>
</feature>
<feature type="modified residue" description="Phosphoserine" evidence="2">
    <location>
        <position position="2"/>
    </location>
</feature>
<feature type="modified residue" description="Asymmetric dimethylarginine; by PRMT1; alternate" evidence="2">
    <location>
        <position position="4"/>
    </location>
</feature>
<feature type="modified residue" description="Citrulline; alternate" evidence="1">
    <location>
        <position position="4"/>
    </location>
</feature>
<feature type="modified residue" description="Omega-N-methylarginine; by PRMT1; alternate" evidence="2">
    <location>
        <position position="4"/>
    </location>
</feature>
<feature type="modified residue" description="Symmetric dimethylarginine; by PRMT5 and PRMT7; alternate" evidence="3">
    <location>
        <position position="4"/>
    </location>
</feature>
<feature type="modified residue" description="N6-(2-hydroxyisobutyryl)lysine; alternate" evidence="2">
    <location>
        <position position="6"/>
    </location>
</feature>
<feature type="modified residue" description="N6-acetyl-N6-methyllysine; alternate" evidence="2">
    <location>
        <position position="6"/>
    </location>
</feature>
<feature type="modified residue" description="N6-acetyllysine; alternate" evidence="2">
    <location>
        <position position="6"/>
    </location>
</feature>
<feature type="modified residue" description="N6-butyryllysine; alternate" evidence="2">
    <location>
        <position position="6"/>
    </location>
</feature>
<feature type="modified residue" description="N6-crotonyllysine; alternate" evidence="2">
    <location>
        <position position="6"/>
    </location>
</feature>
<feature type="modified residue" description="N6-glutaryllysine; alternate" evidence="2">
    <location>
        <position position="6"/>
    </location>
</feature>
<feature type="modified residue" description="N6-lactoyllysine; alternate" evidence="2">
    <location>
        <position position="6"/>
    </location>
</feature>
<feature type="modified residue" description="N6-(2-hydroxyisobutyryl)lysine; alternate" evidence="2">
    <location>
        <position position="9"/>
    </location>
</feature>
<feature type="modified residue" description="N6-(beta-hydroxybutyryl)lysine; alternate" evidence="3">
    <location>
        <position position="9"/>
    </location>
</feature>
<feature type="modified residue" description="N6-acetyllysine; alternate" evidence="2">
    <location>
        <position position="9"/>
    </location>
</feature>
<feature type="modified residue" description="N6-butyryllysine; alternate" evidence="2">
    <location>
        <position position="9"/>
    </location>
</feature>
<feature type="modified residue" description="N6-crotonyllysine; alternate" evidence="2">
    <location>
        <position position="9"/>
    </location>
</feature>
<feature type="modified residue" description="N6-lactoyllysine; alternate" evidence="2">
    <location>
        <position position="9"/>
    </location>
</feature>
<feature type="modified residue" description="N6-propionyllysine; alternate" evidence="2">
    <location>
        <position position="9"/>
    </location>
</feature>
<feature type="modified residue" description="N6-(2-hydroxyisobutyryl)lysine; alternate" evidence="2">
    <location>
        <position position="13"/>
    </location>
</feature>
<feature type="modified residue" description="N6-(beta-hydroxybutyryl)lysine; alternate" evidence="3">
    <location>
        <position position="13"/>
    </location>
</feature>
<feature type="modified residue" description="N6-acetyl-N6-methyllysine; alternate" evidence="2">
    <location>
        <position position="13"/>
    </location>
</feature>
<feature type="modified residue" description="N6-acetyllysine; alternate" evidence="2">
    <location>
        <position position="13"/>
    </location>
</feature>
<feature type="modified residue" description="N6-butyryllysine; alternate" evidence="2">
    <location>
        <position position="13"/>
    </location>
</feature>
<feature type="modified residue" description="N6-crotonyllysine; alternate" evidence="2">
    <location>
        <position position="13"/>
    </location>
</feature>
<feature type="modified residue" description="N6-glutaryllysine; alternate" evidence="2">
    <location>
        <position position="13"/>
    </location>
</feature>
<feature type="modified residue" description="N6-lactoyllysine; alternate" evidence="2">
    <location>
        <position position="13"/>
    </location>
</feature>
<feature type="modified residue" description="N6-methyllysine; alternate" evidence="2">
    <location>
        <position position="13"/>
    </location>
</feature>
<feature type="modified residue" description="N6-succinyllysine; alternate" evidence="2">
    <location>
        <position position="13"/>
    </location>
</feature>
<feature type="modified residue" description="N6-(2-hydroxyisobutyryl)lysine; alternate" evidence="2">
    <location>
        <position position="17"/>
    </location>
</feature>
<feature type="modified residue" description="N6-acetyllysine; alternate" evidence="5">
    <location>
        <position position="17"/>
    </location>
</feature>
<feature type="modified residue" description="N6-butyryllysine; alternate" evidence="2">
    <location>
        <position position="17"/>
    </location>
</feature>
<feature type="modified residue" description="N6-crotonyllysine; alternate" evidence="2">
    <location>
        <position position="17"/>
    </location>
</feature>
<feature type="modified residue" description="N6-lactoyllysine; alternate" evidence="2">
    <location>
        <position position="17"/>
    </location>
</feature>
<feature type="modified residue" description="N6-propionyllysine; alternate" evidence="2">
    <location>
        <position position="17"/>
    </location>
</feature>
<feature type="modified residue" description="N6,N6,N6-trimethyllysine; alternate" evidence="2">
    <location>
        <position position="21"/>
    </location>
</feature>
<feature type="modified residue" description="N6,N6-dimethyllysine; alternate" evidence="5">
    <location>
        <position position="21"/>
    </location>
</feature>
<feature type="modified residue" description="N6-methyllysine; alternate" evidence="5">
    <location>
        <position position="21"/>
    </location>
</feature>
<feature type="modified residue" description="N6-(2-hydroxyisobutyryl)lysine; alternate" evidence="2">
    <location>
        <position position="32"/>
    </location>
</feature>
<feature type="modified residue" description="N6-acetyllysine; alternate" evidence="2">
    <location>
        <position position="32"/>
    </location>
</feature>
<feature type="modified residue" description="N6-butyryllysine; alternate" evidence="2">
    <location>
        <position position="32"/>
    </location>
</feature>
<feature type="modified residue" description="N6-glutaryllysine; alternate" evidence="2">
    <location>
        <position position="32"/>
    </location>
</feature>
<feature type="modified residue" description="N6-lactoyllysine; alternate" evidence="2">
    <location>
        <position position="32"/>
    </location>
</feature>
<feature type="modified residue" description="N6-propionyllysine; alternate" evidence="2">
    <location>
        <position position="32"/>
    </location>
</feature>
<feature type="modified residue" description="N6-succinyllysine; alternate" evidence="2">
    <location>
        <position position="32"/>
    </location>
</feature>
<feature type="modified residue" description="N6-(2-hydroxyisobutyryl)lysine; alternate" evidence="2">
    <location>
        <position position="45"/>
    </location>
</feature>
<feature type="modified residue" description="N6-butyryllysine; alternate" evidence="2">
    <location>
        <position position="45"/>
    </location>
</feature>
<feature type="modified residue" description="N6-propionyllysine; alternate" evidence="2">
    <location>
        <position position="45"/>
    </location>
</feature>
<feature type="modified residue" description="Phosphoserine; by PAK2" evidence="2">
    <location>
        <position position="48"/>
    </location>
</feature>
<feature type="modified residue" description="Phosphotyrosine" evidence="2">
    <location>
        <position position="52"/>
    </location>
</feature>
<feature type="modified residue" description="N6-(2-hydroxyisobutyryl)lysine; alternate" evidence="2">
    <location>
        <position position="60"/>
    </location>
</feature>
<feature type="modified residue" description="N6-glutaryllysine; alternate" evidence="2">
    <location>
        <position position="60"/>
    </location>
</feature>
<feature type="modified residue" description="N6-(2-hydroxyisobutyryl)lysine; alternate" evidence="2">
    <location>
        <position position="78"/>
    </location>
</feature>
<feature type="modified residue" description="N6-butyryllysine; alternate" evidence="2">
    <location>
        <position position="78"/>
    </location>
</feature>
<feature type="modified residue" description="N6-glutaryllysine; alternate" evidence="2">
    <location>
        <position position="78"/>
    </location>
</feature>
<feature type="modified residue" description="N6-lactoyllysine; alternate" evidence="2">
    <location>
        <position position="78"/>
    </location>
</feature>
<feature type="modified residue" description="N6-propionyllysine; alternate" evidence="2">
    <location>
        <position position="78"/>
    </location>
</feature>
<feature type="modified residue" description="N6-succinyllysine; alternate" evidence="2">
    <location>
        <position position="78"/>
    </location>
</feature>
<feature type="modified residue" description="N6-(2-hydroxyisobutyryl)lysine; alternate" evidence="2">
    <location>
        <position position="80"/>
    </location>
</feature>
<feature type="modified residue" description="N6-butyryllysine; alternate" evidence="2">
    <location>
        <position position="80"/>
    </location>
</feature>
<feature type="modified residue" description="N6-glutaryllysine; alternate" evidence="2">
    <location>
        <position position="80"/>
    </location>
</feature>
<feature type="modified residue" description="N6-propionyllysine; alternate" evidence="2">
    <location>
        <position position="80"/>
    </location>
</feature>
<feature type="modified residue" description="N6-succinyllysine; alternate" evidence="3">
    <location>
        <position position="80"/>
    </location>
</feature>
<feature type="modified residue" description="Phosphothreonine" evidence="3">
    <location>
        <position position="81"/>
    </location>
</feature>
<feature type="modified residue" description="Phosphotyrosine" evidence="2">
    <location>
        <position position="89"/>
    </location>
</feature>
<feature type="modified residue" description="N6-(2-hydroxyisobutyryl)lysine; alternate" evidence="2">
    <location>
        <position position="92"/>
    </location>
</feature>
<feature type="modified residue" description="N6-acetyllysine; alternate" evidence="2">
    <location>
        <position position="92"/>
    </location>
</feature>
<feature type="modified residue" description="N6-butyryllysine; alternate" evidence="2">
    <location>
        <position position="92"/>
    </location>
</feature>
<feature type="modified residue" description="N6-glutaryllysine; alternate" evidence="2">
    <location>
        <position position="92"/>
    </location>
</feature>
<feature type="modified residue" description="N6-lactoyllysine; alternate" evidence="2">
    <location>
        <position position="92"/>
    </location>
</feature>
<feature type="modified residue" description="N6-propionyllysine; alternate" evidence="2">
    <location>
        <position position="92"/>
    </location>
</feature>
<feature type="modified residue" description="N6-succinyllysine; alternate" evidence="2">
    <location>
        <position position="92"/>
    </location>
</feature>
<feature type="cross-link" description="Glycyl lysine isopeptide (Lys-Gly) (interchain with G-Cter in SUMO2); alternate" evidence="2">
    <location>
        <position position="13"/>
    </location>
</feature>
<feature type="cross-link" description="Glycyl lysine isopeptide (Lys-Gly) (interchain with G-Cter in SUMO2); alternate" evidence="2">
    <location>
        <position position="21"/>
    </location>
</feature>
<feature type="cross-link" description="Glycyl lysine isopeptide (Lys-Gly) (interchain with G-Cter in SUMO2); alternate" evidence="2">
    <location>
        <position position="32"/>
    </location>
</feature>
<feature type="cross-link" description="Glycyl lysine isopeptide (Lys-Gly) (interchain with G-Cter in UFM1); alternate" evidence="2">
    <location>
        <position position="32"/>
    </location>
</feature>
<feature type="cross-link" description="Glycyl lysine isopeptide (Lys-Gly) (interchain with G-Cter in SUMO2); alternate" evidence="2">
    <location>
        <position position="60"/>
    </location>
</feature>
<feature type="cross-link" description="Glycyl lysine isopeptide (Lys-Gly) (interchain with G-Cter in SUMO2); alternate" evidence="2">
    <location>
        <position position="80"/>
    </location>
</feature>
<feature type="cross-link" description="Glycyl lysine isopeptide (Lys-Gly) (interchain with G-Cter in SUMO2); alternate" evidence="2">
    <location>
        <position position="92"/>
    </location>
</feature>
<feature type="cross-link" description="Glycyl lysine isopeptide (Lys-Gly) (interchain with G-Cter in ubiquitin); alternate" evidence="2">
    <location>
        <position position="92"/>
    </location>
</feature>
<keyword id="KW-0007">Acetylation</keyword>
<keyword id="KW-0158">Chromosome</keyword>
<keyword id="KW-0164">Citrullination</keyword>
<keyword id="KW-0903">Direct protein sequencing</keyword>
<keyword id="KW-0238">DNA-binding</keyword>
<keyword id="KW-0379">Hydroxylation</keyword>
<keyword id="KW-1017">Isopeptide bond</keyword>
<keyword id="KW-0488">Methylation</keyword>
<keyword id="KW-0544">Nucleosome core</keyword>
<keyword id="KW-0539">Nucleus</keyword>
<keyword id="KW-0597">Phosphoprotein</keyword>
<keyword id="KW-1185">Reference proteome</keyword>
<keyword id="KW-0832">Ubl conjugation</keyword>
<evidence type="ECO:0000250" key="1"/>
<evidence type="ECO:0000250" key="2">
    <source>
        <dbReference type="UniProtKB" id="P62805"/>
    </source>
</evidence>
<evidence type="ECO:0000250" key="3">
    <source>
        <dbReference type="UniProtKB" id="P62806"/>
    </source>
</evidence>
<evidence type="ECO:0000256" key="4">
    <source>
        <dbReference type="SAM" id="MobiDB-lite"/>
    </source>
</evidence>
<evidence type="ECO:0000269" key="5">
    <source>
    </source>
</evidence>
<evidence type="ECO:0000305" key="6"/>
<organism>
    <name type="scientific">Sus scrofa</name>
    <name type="common">Pig</name>
    <dbReference type="NCBI Taxonomy" id="9823"/>
    <lineage>
        <taxon>Eukaryota</taxon>
        <taxon>Metazoa</taxon>
        <taxon>Chordata</taxon>
        <taxon>Craniata</taxon>
        <taxon>Vertebrata</taxon>
        <taxon>Euteleostomi</taxon>
        <taxon>Mammalia</taxon>
        <taxon>Eutheria</taxon>
        <taxon>Laurasiatheria</taxon>
        <taxon>Artiodactyla</taxon>
        <taxon>Suina</taxon>
        <taxon>Suidae</taxon>
        <taxon>Sus</taxon>
    </lineage>
</organism>
<sequence length="103" mass="11367">MSGRGKGGKGLGKGGAKRHRKVLRDNIQGITKPAIRRLARRGGVKRISGLIYEETRGVLKVFLENVIRDAVTYTEHAKRKTVTAMDVVYALKRQGRTLYGFGG</sequence>
<reference key="1">
    <citation type="journal article" date="1971" name="Biochimie">
        <title>A glycine-rich and arginine-rich histone from swine thymus: study of tryptic peptides and complete sequence.</title>
        <authorList>
            <person name="Sautiere P."/>
            <person name="Lambelin-Breynaert M.-D."/>
            <person name="Moschetto Y."/>
            <person name="Biserte G."/>
        </authorList>
    </citation>
    <scope>PROTEIN SEQUENCE OF 2-103</scope>
    <scope>ACETYLATION AT SER-2 AND LYS-17</scope>
    <scope>METHYLATION AT LYS-21</scope>
    <source>
        <tissue>Thymus</tissue>
    </source>
</reference>